<comment type="subcellular location">
    <subcellularLocation>
        <location evidence="2">Cell membrane</location>
        <topology evidence="2">Multi-pass membrane protein</topology>
    </subcellularLocation>
</comment>
<comment type="similarity">
    <text evidence="2">Belongs to the UPF0324 family.</text>
</comment>
<dbReference type="EMBL" id="BX640449">
    <property type="protein sequence ID" value="CAE34542.1"/>
    <property type="molecule type" value="Genomic_DNA"/>
</dbReference>
<dbReference type="KEGG" id="bbr:BB4178"/>
<dbReference type="eggNOG" id="COG2855">
    <property type="taxonomic scope" value="Bacteria"/>
</dbReference>
<dbReference type="HOGENOM" id="CLU_033541_0_0_4"/>
<dbReference type="Proteomes" id="UP000001027">
    <property type="component" value="Chromosome"/>
</dbReference>
<dbReference type="GO" id="GO:0005886">
    <property type="term" value="C:plasma membrane"/>
    <property type="evidence" value="ECO:0007669"/>
    <property type="project" value="UniProtKB-SubCell"/>
</dbReference>
<dbReference type="InterPro" id="IPR018383">
    <property type="entry name" value="UPF0324_pro"/>
</dbReference>
<dbReference type="InterPro" id="IPR004630">
    <property type="entry name" value="UPF0324_YeiH-like"/>
</dbReference>
<dbReference type="NCBIfam" id="TIGR00698">
    <property type="entry name" value="YeiH family putative sulfate export transporter"/>
    <property type="match status" value="1"/>
</dbReference>
<dbReference type="PANTHER" id="PTHR30106">
    <property type="entry name" value="INNER MEMBRANE PROTEIN YEIH-RELATED"/>
    <property type="match status" value="1"/>
</dbReference>
<dbReference type="PANTHER" id="PTHR30106:SF2">
    <property type="entry name" value="UPF0324 INNER MEMBRANE PROTEIN YEIH"/>
    <property type="match status" value="1"/>
</dbReference>
<dbReference type="Pfam" id="PF03601">
    <property type="entry name" value="Cons_hypoth698"/>
    <property type="match status" value="1"/>
</dbReference>
<organism>
    <name type="scientific">Bordetella bronchiseptica (strain ATCC BAA-588 / NCTC 13252 / RB50)</name>
    <name type="common">Alcaligenes bronchisepticus</name>
    <dbReference type="NCBI Taxonomy" id="257310"/>
    <lineage>
        <taxon>Bacteria</taxon>
        <taxon>Pseudomonadati</taxon>
        <taxon>Pseudomonadota</taxon>
        <taxon>Betaproteobacteria</taxon>
        <taxon>Burkholderiales</taxon>
        <taxon>Alcaligenaceae</taxon>
        <taxon>Bordetella</taxon>
    </lineage>
</organism>
<feature type="chain" id="PRO_0000157397" description="UPF0324 membrane protein BB4178">
    <location>
        <begin position="1"/>
        <end position="322"/>
    </location>
</feature>
<feature type="transmembrane region" description="Helical" evidence="1">
    <location>
        <begin position="13"/>
        <end position="35"/>
    </location>
</feature>
<feature type="transmembrane region" description="Helical" evidence="1">
    <location>
        <begin position="50"/>
        <end position="69"/>
    </location>
</feature>
<feature type="transmembrane region" description="Helical" evidence="1">
    <location>
        <begin position="76"/>
        <end position="98"/>
    </location>
</feature>
<feature type="transmembrane region" description="Helical" evidence="1">
    <location>
        <begin position="108"/>
        <end position="127"/>
    </location>
</feature>
<feature type="transmembrane region" description="Helical" evidence="1">
    <location>
        <begin position="139"/>
        <end position="161"/>
    </location>
</feature>
<feature type="transmembrane region" description="Helical" evidence="1">
    <location>
        <begin position="171"/>
        <end position="193"/>
    </location>
</feature>
<feature type="transmembrane region" description="Helical" evidence="1">
    <location>
        <begin position="209"/>
        <end position="231"/>
    </location>
</feature>
<feature type="transmembrane region" description="Helical" evidence="1">
    <location>
        <begin position="241"/>
        <end position="260"/>
    </location>
</feature>
<feature type="transmembrane region" description="Helical" evidence="1">
    <location>
        <begin position="273"/>
        <end position="292"/>
    </location>
</feature>
<feature type="transmembrane region" description="Helical" evidence="1">
    <location>
        <begin position="296"/>
        <end position="318"/>
    </location>
</feature>
<name>Y4178_BORBR</name>
<gene>
    <name type="ordered locus">BB4178</name>
</gene>
<protein>
    <recommendedName>
        <fullName>UPF0324 membrane protein BB4178</fullName>
    </recommendedName>
</protein>
<proteinExistence type="inferred from homology"/>
<reference key="1">
    <citation type="journal article" date="2003" name="Nat. Genet.">
        <title>Comparative analysis of the genome sequences of Bordetella pertussis, Bordetella parapertussis and Bordetella bronchiseptica.</title>
        <authorList>
            <person name="Parkhill J."/>
            <person name="Sebaihia M."/>
            <person name="Preston A."/>
            <person name="Murphy L.D."/>
            <person name="Thomson N.R."/>
            <person name="Harris D.E."/>
            <person name="Holden M.T.G."/>
            <person name="Churcher C.M."/>
            <person name="Bentley S.D."/>
            <person name="Mungall K.L."/>
            <person name="Cerdeno-Tarraga A.-M."/>
            <person name="Temple L."/>
            <person name="James K.D."/>
            <person name="Harris B."/>
            <person name="Quail M.A."/>
            <person name="Achtman M."/>
            <person name="Atkin R."/>
            <person name="Baker S."/>
            <person name="Basham D."/>
            <person name="Bason N."/>
            <person name="Cherevach I."/>
            <person name="Chillingworth T."/>
            <person name="Collins M."/>
            <person name="Cronin A."/>
            <person name="Davis P."/>
            <person name="Doggett J."/>
            <person name="Feltwell T."/>
            <person name="Goble A."/>
            <person name="Hamlin N."/>
            <person name="Hauser H."/>
            <person name="Holroyd S."/>
            <person name="Jagels K."/>
            <person name="Leather S."/>
            <person name="Moule S."/>
            <person name="Norberczak H."/>
            <person name="O'Neil S."/>
            <person name="Ormond D."/>
            <person name="Price C."/>
            <person name="Rabbinowitsch E."/>
            <person name="Rutter S."/>
            <person name="Sanders M."/>
            <person name="Saunders D."/>
            <person name="Seeger K."/>
            <person name="Sharp S."/>
            <person name="Simmonds M."/>
            <person name="Skelton J."/>
            <person name="Squares R."/>
            <person name="Squares S."/>
            <person name="Stevens K."/>
            <person name="Unwin L."/>
            <person name="Whitehead S."/>
            <person name="Barrell B.G."/>
            <person name="Maskell D.J."/>
        </authorList>
    </citation>
    <scope>NUCLEOTIDE SEQUENCE [LARGE SCALE GENOMIC DNA]</scope>
    <source>
        <strain>ATCC BAA-588 / NCTC 13252 / RB50</strain>
    </source>
</reference>
<evidence type="ECO:0000255" key="1"/>
<evidence type="ECO:0000305" key="2"/>
<keyword id="KW-1003">Cell membrane</keyword>
<keyword id="KW-0472">Membrane</keyword>
<keyword id="KW-0812">Transmembrane</keyword>
<keyword id="KW-1133">Transmembrane helix</keyword>
<sequence>MAAAVVQLADLPFIRQFGFSPLVVGIVCGMLYGNFLRGTMPADWGAGVHFTARRLLRIAVAFYGLNISIQQIAAVGLPGLAVSVGVVASTLLIGTVAGQRLLGLDRDTAMLTAAGSAICGAAAVLAFEPTLRAAPHKSAVAVATVVLFGTLSMFLYPVIYHAGWLPFDTQALGIYIGGTVHEVAQVVGAASNIDPATTEVATIVKMTRVALLVPVLLVLGFWLRASAAAGADGKSHAKLPVPWFAIGFLVLAIVNSLDILPSDLVTAIRKLDVFVLTMAMTALGIETRFAQIRKAGPRVMALGLVLYAWLVFGGYGIVKLAT</sequence>
<accession>Q7WFU2</accession>